<dbReference type="EMBL" id="X73124">
    <property type="protein sequence ID" value="CAA51617.1"/>
    <property type="molecule type" value="Genomic_DNA"/>
</dbReference>
<dbReference type="EMBL" id="AL009126">
    <property type="protein sequence ID" value="CAB15819.2"/>
    <property type="molecule type" value="Genomic_DNA"/>
</dbReference>
<dbReference type="PIR" id="S39716">
    <property type="entry name" value="S39716"/>
</dbReference>
<dbReference type="RefSeq" id="NP_391672.2">
    <property type="nucleotide sequence ID" value="NC_000964.3"/>
</dbReference>
<dbReference type="RefSeq" id="WP_003227446.1">
    <property type="nucleotide sequence ID" value="NZ_OZ025638.1"/>
</dbReference>
<dbReference type="FunCoup" id="P39619">
    <property type="interactions" value="390"/>
</dbReference>
<dbReference type="STRING" id="224308.BSU37930"/>
<dbReference type="PaxDb" id="224308-BSU37930"/>
<dbReference type="EnsemblBacteria" id="CAB15819">
    <property type="protein sequence ID" value="CAB15819"/>
    <property type="gene ID" value="BSU_37930"/>
</dbReference>
<dbReference type="GeneID" id="937242"/>
<dbReference type="KEGG" id="bsu:BSU37930"/>
<dbReference type="PATRIC" id="fig|224308.179.peg.4107"/>
<dbReference type="eggNOG" id="COG2363">
    <property type="taxonomic scope" value="Bacteria"/>
</dbReference>
<dbReference type="InParanoid" id="P39619"/>
<dbReference type="OrthoDB" id="9802121at2"/>
<dbReference type="PhylomeDB" id="P39619"/>
<dbReference type="BioCyc" id="BSUB:BSU37930-MONOMER"/>
<dbReference type="Proteomes" id="UP000001570">
    <property type="component" value="Chromosome"/>
</dbReference>
<dbReference type="GO" id="GO:0005886">
    <property type="term" value="C:plasma membrane"/>
    <property type="evidence" value="ECO:0000318"/>
    <property type="project" value="GO_Central"/>
</dbReference>
<dbReference type="InterPro" id="IPR006696">
    <property type="entry name" value="DUF423"/>
</dbReference>
<dbReference type="PANTHER" id="PTHR43461">
    <property type="entry name" value="TRANSMEMBRANE PROTEIN 256"/>
    <property type="match status" value="1"/>
</dbReference>
<dbReference type="PANTHER" id="PTHR43461:SF1">
    <property type="entry name" value="TRANSMEMBRANE PROTEIN 256"/>
    <property type="match status" value="1"/>
</dbReference>
<dbReference type="Pfam" id="PF04241">
    <property type="entry name" value="DUF423"/>
    <property type="match status" value="1"/>
</dbReference>
<reference key="1">
    <citation type="journal article" date="1993" name="Mol. Microbiol.">
        <title>Bacillus subtilis genome project: cloning and sequencing of the 97 kb region from 325 degrees to 333 degrees.</title>
        <authorList>
            <person name="Glaser P."/>
            <person name="Kunst F."/>
            <person name="Arnaud M."/>
            <person name="Coudart M.P."/>
            <person name="Gonzales W."/>
            <person name="Hullo M.-F."/>
            <person name="Ionescu M."/>
            <person name="Lubochinsky B."/>
            <person name="Marcelino L."/>
            <person name="Moszer I."/>
            <person name="Presecan E."/>
            <person name="Santana M."/>
            <person name="Schneider E."/>
            <person name="Schweizer J."/>
            <person name="Vertes A."/>
            <person name="Rapoport G."/>
            <person name="Danchin A."/>
        </authorList>
    </citation>
    <scope>NUCLEOTIDE SEQUENCE [GENOMIC DNA]</scope>
    <source>
        <strain>168</strain>
    </source>
</reference>
<reference key="2">
    <citation type="journal article" date="1997" name="Nature">
        <title>The complete genome sequence of the Gram-positive bacterium Bacillus subtilis.</title>
        <authorList>
            <person name="Kunst F."/>
            <person name="Ogasawara N."/>
            <person name="Moszer I."/>
            <person name="Albertini A.M."/>
            <person name="Alloni G."/>
            <person name="Azevedo V."/>
            <person name="Bertero M.G."/>
            <person name="Bessieres P."/>
            <person name="Bolotin A."/>
            <person name="Borchert S."/>
            <person name="Borriss R."/>
            <person name="Boursier L."/>
            <person name="Brans A."/>
            <person name="Braun M."/>
            <person name="Brignell S.C."/>
            <person name="Bron S."/>
            <person name="Brouillet S."/>
            <person name="Bruschi C.V."/>
            <person name="Caldwell B."/>
            <person name="Capuano V."/>
            <person name="Carter N.M."/>
            <person name="Choi S.-K."/>
            <person name="Codani J.-J."/>
            <person name="Connerton I.F."/>
            <person name="Cummings N.J."/>
            <person name="Daniel R.A."/>
            <person name="Denizot F."/>
            <person name="Devine K.M."/>
            <person name="Duesterhoeft A."/>
            <person name="Ehrlich S.D."/>
            <person name="Emmerson P.T."/>
            <person name="Entian K.-D."/>
            <person name="Errington J."/>
            <person name="Fabret C."/>
            <person name="Ferrari E."/>
            <person name="Foulger D."/>
            <person name="Fritz C."/>
            <person name="Fujita M."/>
            <person name="Fujita Y."/>
            <person name="Fuma S."/>
            <person name="Galizzi A."/>
            <person name="Galleron N."/>
            <person name="Ghim S.-Y."/>
            <person name="Glaser P."/>
            <person name="Goffeau A."/>
            <person name="Golightly E.J."/>
            <person name="Grandi G."/>
            <person name="Guiseppi G."/>
            <person name="Guy B.J."/>
            <person name="Haga K."/>
            <person name="Haiech J."/>
            <person name="Harwood C.R."/>
            <person name="Henaut A."/>
            <person name="Hilbert H."/>
            <person name="Holsappel S."/>
            <person name="Hosono S."/>
            <person name="Hullo M.-F."/>
            <person name="Itaya M."/>
            <person name="Jones L.-M."/>
            <person name="Joris B."/>
            <person name="Karamata D."/>
            <person name="Kasahara Y."/>
            <person name="Klaerr-Blanchard M."/>
            <person name="Klein C."/>
            <person name="Kobayashi Y."/>
            <person name="Koetter P."/>
            <person name="Koningstein G."/>
            <person name="Krogh S."/>
            <person name="Kumano M."/>
            <person name="Kurita K."/>
            <person name="Lapidus A."/>
            <person name="Lardinois S."/>
            <person name="Lauber J."/>
            <person name="Lazarevic V."/>
            <person name="Lee S.-M."/>
            <person name="Levine A."/>
            <person name="Liu H."/>
            <person name="Masuda S."/>
            <person name="Mauel C."/>
            <person name="Medigue C."/>
            <person name="Medina N."/>
            <person name="Mellado R.P."/>
            <person name="Mizuno M."/>
            <person name="Moestl D."/>
            <person name="Nakai S."/>
            <person name="Noback M."/>
            <person name="Noone D."/>
            <person name="O'Reilly M."/>
            <person name="Ogawa K."/>
            <person name="Ogiwara A."/>
            <person name="Oudega B."/>
            <person name="Park S.-H."/>
            <person name="Parro V."/>
            <person name="Pohl T.M."/>
            <person name="Portetelle D."/>
            <person name="Porwollik S."/>
            <person name="Prescott A.M."/>
            <person name="Presecan E."/>
            <person name="Pujic P."/>
            <person name="Purnelle B."/>
            <person name="Rapoport G."/>
            <person name="Rey M."/>
            <person name="Reynolds S."/>
            <person name="Rieger M."/>
            <person name="Rivolta C."/>
            <person name="Rocha E."/>
            <person name="Roche B."/>
            <person name="Rose M."/>
            <person name="Sadaie Y."/>
            <person name="Sato T."/>
            <person name="Scanlan E."/>
            <person name="Schleich S."/>
            <person name="Schroeter R."/>
            <person name="Scoffone F."/>
            <person name="Sekiguchi J."/>
            <person name="Sekowska A."/>
            <person name="Seror S.J."/>
            <person name="Serror P."/>
            <person name="Shin B.-S."/>
            <person name="Soldo B."/>
            <person name="Sorokin A."/>
            <person name="Tacconi E."/>
            <person name="Takagi T."/>
            <person name="Takahashi H."/>
            <person name="Takemaru K."/>
            <person name="Takeuchi M."/>
            <person name="Tamakoshi A."/>
            <person name="Tanaka T."/>
            <person name="Terpstra P."/>
            <person name="Tognoni A."/>
            <person name="Tosato V."/>
            <person name="Uchiyama S."/>
            <person name="Vandenbol M."/>
            <person name="Vannier F."/>
            <person name="Vassarotti A."/>
            <person name="Viari A."/>
            <person name="Wambutt R."/>
            <person name="Wedler E."/>
            <person name="Wedler H."/>
            <person name="Weitzenegger T."/>
            <person name="Winters P."/>
            <person name="Wipat A."/>
            <person name="Yamamoto H."/>
            <person name="Yamane K."/>
            <person name="Yasumoto K."/>
            <person name="Yata K."/>
            <person name="Yoshida K."/>
            <person name="Yoshikawa H.-F."/>
            <person name="Zumstein E."/>
            <person name="Yoshikawa H."/>
            <person name="Danchin A."/>
        </authorList>
    </citation>
    <scope>NUCLEOTIDE SEQUENCE [LARGE SCALE GENOMIC DNA]</scope>
    <source>
        <strain>168</strain>
    </source>
</reference>
<reference key="3">
    <citation type="journal article" date="2009" name="Microbiology">
        <title>From a consortium sequence to a unified sequence: the Bacillus subtilis 168 reference genome a decade later.</title>
        <authorList>
            <person name="Barbe V."/>
            <person name="Cruveiller S."/>
            <person name="Kunst F."/>
            <person name="Lenoble P."/>
            <person name="Meurice G."/>
            <person name="Sekowska A."/>
            <person name="Vallenet D."/>
            <person name="Wang T."/>
            <person name="Moszer I."/>
            <person name="Medigue C."/>
            <person name="Danchin A."/>
        </authorList>
    </citation>
    <scope>SEQUENCE REVISION TO C-TERMINUS</scope>
</reference>
<reference key="4">
    <citation type="journal article" date="2003" name="Mol. Microbiol.">
        <title>Identification of additional TnrA-regulated genes of Bacillus subtilis associated with a TnrA box.</title>
        <authorList>
            <person name="Yoshida K."/>
            <person name="Yamaguchi H."/>
            <person name="Kinehara M."/>
            <person name="Ohki Y.-H."/>
            <person name="Nakaura Y."/>
            <person name="Fujita Y."/>
        </authorList>
    </citation>
    <scope>REGULATION BY TNRA</scope>
</reference>
<proteinExistence type="evidence at transcript level"/>
<organism>
    <name type="scientific">Bacillus subtilis (strain 168)</name>
    <dbReference type="NCBI Taxonomy" id="224308"/>
    <lineage>
        <taxon>Bacteria</taxon>
        <taxon>Bacillati</taxon>
        <taxon>Bacillota</taxon>
        <taxon>Bacilli</taxon>
        <taxon>Bacillales</taxon>
        <taxon>Bacillaceae</taxon>
        <taxon>Bacillus</taxon>
    </lineage>
</organism>
<protein>
    <recommendedName>
        <fullName>UPF0382 membrane protein YwdK</fullName>
    </recommendedName>
</protein>
<evidence type="ECO:0000255" key="1"/>
<evidence type="ECO:0000305" key="2"/>
<accession>P39619</accession>
<name>YWDK_BACSU</name>
<feature type="chain" id="PRO_0000049967" description="UPF0382 membrane protein YwdK">
    <location>
        <begin position="1"/>
        <end position="123"/>
    </location>
</feature>
<feature type="transmembrane region" description="Helical" evidence="1">
    <location>
        <begin position="3"/>
        <end position="23"/>
    </location>
</feature>
<feature type="transmembrane region" description="Helical" evidence="1">
    <location>
        <begin position="49"/>
        <end position="69"/>
    </location>
</feature>
<feature type="transmembrane region" description="Helical" evidence="1">
    <location>
        <begin position="71"/>
        <end position="91"/>
    </location>
</feature>
<feature type="transmembrane region" description="Helical" evidence="1">
    <location>
        <begin position="96"/>
        <end position="116"/>
    </location>
</feature>
<feature type="sequence conflict" description="In Ref. 1; CAA51617." evidence="2" ref="1">
    <original>GVAFIISWIMIVVAAVKYL</original>
    <variation>VWRLLFLGL</variation>
    <location>
        <begin position="105"/>
        <end position="123"/>
    </location>
</feature>
<sequence length="123" mass="13009">MKVFIILGAINALLAVGLGAFGAHGLEGKIPDKYLQVWHTGVQYHMYHALGLFVVAFLADKLSGIGSVTTAGWLMFAGIVLFSGSLYILSVTQISILGAITPLGGVAFIISWIMIVVAAVKYL</sequence>
<keyword id="KW-1003">Cell membrane</keyword>
<keyword id="KW-0472">Membrane</keyword>
<keyword id="KW-1185">Reference proteome</keyword>
<keyword id="KW-0812">Transmembrane</keyword>
<keyword id="KW-1133">Transmembrane helix</keyword>
<comment type="subcellular location">
    <subcellularLocation>
        <location evidence="2">Cell membrane</location>
        <topology evidence="2">Multi-pass membrane protein</topology>
    </subcellularLocation>
</comment>
<comment type="induction">
    <text>Negatively regulated by TnrA under nitrogen-limited conditions.</text>
</comment>
<comment type="similarity">
    <text evidence="2">Belongs to the UPF0382 family.</text>
</comment>
<gene>
    <name type="primary">ywdK</name>
    <name type="ordered locus">BSU37930</name>
    <name type="ORF">ipa-61d</name>
</gene>